<keyword id="KW-0067">ATP-binding</keyword>
<keyword id="KW-0444">Lipid biosynthesis</keyword>
<keyword id="KW-0443">Lipid metabolism</keyword>
<keyword id="KW-0456">Lyase</keyword>
<keyword id="KW-0547">Nucleotide-binding</keyword>
<keyword id="KW-0752">Steroid biosynthesis</keyword>
<keyword id="KW-0753">Steroid metabolism</keyword>
<keyword id="KW-0756">Sterol biosynthesis</keyword>
<keyword id="KW-1207">Sterol metabolism</keyword>
<dbReference type="EC" id="4.1.1.33" evidence="2"/>
<dbReference type="EMBL" id="HQ596494">
    <property type="protein sequence ID" value="AEB00646.1"/>
    <property type="molecule type" value="Genomic_DNA"/>
</dbReference>
<dbReference type="EMBL" id="HQ596495">
    <property type="protein sequence ID" value="AEB00647.1"/>
    <property type="molecule type" value="mRNA"/>
</dbReference>
<dbReference type="SMR" id="G9BIY1"/>
<dbReference type="BRENDA" id="4.1.1.33">
    <property type="organism ID" value="2399"/>
</dbReference>
<dbReference type="UniPathway" id="UPA00057">
    <property type="reaction ID" value="UER00100"/>
</dbReference>
<dbReference type="GO" id="GO:0005829">
    <property type="term" value="C:cytosol"/>
    <property type="evidence" value="ECO:0007669"/>
    <property type="project" value="InterPro"/>
</dbReference>
<dbReference type="GO" id="GO:0005524">
    <property type="term" value="F:ATP binding"/>
    <property type="evidence" value="ECO:0007669"/>
    <property type="project" value="UniProtKB-KW"/>
</dbReference>
<dbReference type="GO" id="GO:0004163">
    <property type="term" value="F:diphosphomevalonate decarboxylase activity"/>
    <property type="evidence" value="ECO:0000250"/>
    <property type="project" value="UniProtKB"/>
</dbReference>
<dbReference type="GO" id="GO:0019287">
    <property type="term" value="P:isopentenyl diphosphate biosynthetic process, mevalonate pathway"/>
    <property type="evidence" value="ECO:0007669"/>
    <property type="project" value="UniProtKB-UniPathway"/>
</dbReference>
<dbReference type="GO" id="GO:0016126">
    <property type="term" value="P:sterol biosynthetic process"/>
    <property type="evidence" value="ECO:0007669"/>
    <property type="project" value="UniProtKB-KW"/>
</dbReference>
<dbReference type="FunFam" id="3.30.230.10:FF:000018">
    <property type="entry name" value="Diphosphomevalonate decarboxylase"/>
    <property type="match status" value="1"/>
</dbReference>
<dbReference type="FunFam" id="3.30.70.890:FF:000005">
    <property type="entry name" value="Diphosphomevalonate decarboxylase"/>
    <property type="match status" value="1"/>
</dbReference>
<dbReference type="Gene3D" id="3.30.230.10">
    <property type="match status" value="1"/>
</dbReference>
<dbReference type="Gene3D" id="3.30.70.890">
    <property type="entry name" value="GHMP kinase, C-terminal domain"/>
    <property type="match status" value="1"/>
</dbReference>
<dbReference type="InterPro" id="IPR036554">
    <property type="entry name" value="GHMP_kinase_C_sf"/>
</dbReference>
<dbReference type="InterPro" id="IPR005935">
    <property type="entry name" value="Mev_decarb"/>
</dbReference>
<dbReference type="InterPro" id="IPR029765">
    <property type="entry name" value="Mev_diP_decarb"/>
</dbReference>
<dbReference type="InterPro" id="IPR053859">
    <property type="entry name" value="MVD-like_N"/>
</dbReference>
<dbReference type="InterPro" id="IPR041431">
    <property type="entry name" value="Mvd1_C"/>
</dbReference>
<dbReference type="InterPro" id="IPR020568">
    <property type="entry name" value="Ribosomal_Su5_D2-typ_SF"/>
</dbReference>
<dbReference type="InterPro" id="IPR014721">
    <property type="entry name" value="Ribsml_uS5_D2-typ_fold_subgr"/>
</dbReference>
<dbReference type="NCBIfam" id="TIGR01240">
    <property type="entry name" value="mevDPdecarb"/>
    <property type="match status" value="1"/>
</dbReference>
<dbReference type="PANTHER" id="PTHR10977">
    <property type="entry name" value="DIPHOSPHOMEVALONATE DECARBOXYLASE"/>
    <property type="match status" value="1"/>
</dbReference>
<dbReference type="PANTHER" id="PTHR10977:SF3">
    <property type="entry name" value="DIPHOSPHOMEVALONATE DECARBOXYLASE"/>
    <property type="match status" value="1"/>
</dbReference>
<dbReference type="Pfam" id="PF18376">
    <property type="entry name" value="MDD_C"/>
    <property type="match status" value="1"/>
</dbReference>
<dbReference type="Pfam" id="PF22700">
    <property type="entry name" value="MVD-like_N"/>
    <property type="match status" value="1"/>
</dbReference>
<dbReference type="PIRSF" id="PIRSF015950">
    <property type="entry name" value="Mev_P_decrbx"/>
    <property type="match status" value="1"/>
</dbReference>
<dbReference type="SUPFAM" id="SSF55060">
    <property type="entry name" value="GHMP Kinase, C-terminal domain"/>
    <property type="match status" value="1"/>
</dbReference>
<dbReference type="SUPFAM" id="SSF54211">
    <property type="entry name" value="Ribosomal protein S5 domain 2-like"/>
    <property type="match status" value="1"/>
</dbReference>
<feature type="chain" id="PRO_0000439249" description="Diphosphomevalonate decarboxylase">
    <location>
        <begin position="1"/>
        <end position="400"/>
    </location>
</feature>
<feature type="region of interest" description="Disordered" evidence="4">
    <location>
        <begin position="381"/>
        <end position="400"/>
    </location>
</feature>
<feature type="binding site" evidence="1">
    <location>
        <begin position="19"/>
        <end position="22"/>
    </location>
    <ligand>
        <name>(R)-5-diphosphomevalonate</name>
        <dbReference type="ChEBI" id="CHEBI:57557"/>
    </ligand>
</feature>
<feature type="binding site" evidence="1">
    <location>
        <position position="75"/>
    </location>
    <ligand>
        <name>(R)-5-diphosphomevalonate</name>
        <dbReference type="ChEBI" id="CHEBI:57557"/>
    </ligand>
</feature>
<feature type="binding site" evidence="1">
    <location>
        <begin position="154"/>
        <end position="159"/>
    </location>
    <ligand>
        <name>(R)-5-diphosphomevalonate</name>
        <dbReference type="ChEBI" id="CHEBI:57557"/>
    </ligand>
</feature>
<feature type="binding site" evidence="1">
    <location>
        <position position="210"/>
    </location>
    <ligand>
        <name>(R)-5-diphosphomevalonate</name>
        <dbReference type="ChEBI" id="CHEBI:57557"/>
    </ligand>
</feature>
<proteinExistence type="evidence at transcript level"/>
<gene>
    <name evidence="8" type="primary">MVD</name>
</gene>
<accession>G9BIY1</accession>
<organism>
    <name type="scientific">Ganoderma lucidum</name>
    <name type="common">Ling zhi medicinal fungus</name>
    <name type="synonym">Bracket fungus</name>
    <dbReference type="NCBI Taxonomy" id="5315"/>
    <lineage>
        <taxon>Eukaryota</taxon>
        <taxon>Fungi</taxon>
        <taxon>Dikarya</taxon>
        <taxon>Basidiomycota</taxon>
        <taxon>Agaricomycotina</taxon>
        <taxon>Agaricomycetes</taxon>
        <taxon>Polyporales</taxon>
        <taxon>Polyporaceae</taxon>
        <taxon>Ganoderma</taxon>
    </lineage>
</organism>
<protein>
    <recommendedName>
        <fullName evidence="2">Diphosphomevalonate decarboxylase</fullName>
        <ecNumber evidence="2">4.1.1.33</ecNumber>
    </recommendedName>
    <alternativeName>
        <fullName evidence="8">Mevalonate pyrophosphate decarboxylase</fullName>
        <shortName evidence="2">MPD</shortName>
    </alternativeName>
    <alternativeName>
        <fullName evidence="2">Mevalonate-5-diphosphate decarboxylase</fullName>
        <shortName evidence="2">MDD</shortName>
        <shortName evidence="2">MDDase</shortName>
    </alternativeName>
</protein>
<evidence type="ECO:0000250" key="1">
    <source>
        <dbReference type="UniProtKB" id="O23722"/>
    </source>
</evidence>
<evidence type="ECO:0000250" key="2">
    <source>
        <dbReference type="UniProtKB" id="P32377"/>
    </source>
</evidence>
<evidence type="ECO:0000255" key="3">
    <source>
        <dbReference type="RuleBase" id="RU363086"/>
    </source>
</evidence>
<evidence type="ECO:0000256" key="4">
    <source>
        <dbReference type="SAM" id="MobiDB-lite"/>
    </source>
</evidence>
<evidence type="ECO:0000269" key="5">
    <source>
    </source>
</evidence>
<evidence type="ECO:0000269" key="6">
    <source>
    </source>
</evidence>
<evidence type="ECO:0000269" key="7">
    <source>
    </source>
</evidence>
<evidence type="ECO:0000303" key="8">
    <source>
    </source>
</evidence>
<evidence type="ECO:0000305" key="9"/>
<reference key="1">
    <citation type="journal article" date="2012" name="Mol. Biol. Rep.">
        <title>Molecular cloning, characterization, and function analysis of a mevalonate pyrophosphate decarboxylase gene from Ganoderma lucidum.</title>
        <authorList>
            <person name="Shi L."/>
            <person name="Qin L."/>
            <person name="Xu Y."/>
            <person name="Ren A."/>
            <person name="Fang X."/>
            <person name="Mu D."/>
            <person name="Tan Q."/>
            <person name="Zhao M."/>
        </authorList>
    </citation>
    <scope>NUCLEOTIDE SEQUENCE [GENOMIC DNA / MRNA]</scope>
    <scope>DEVELOPMENTAL STAGE</scope>
    <scope>INDUCTION</scope>
    <scope>FUNCTION</scope>
    <source>
        <strain>HG</strain>
    </source>
</reference>
<reference key="2">
    <citation type="journal article" date="2008" name="Biosci. Biotechnol. Biochem.">
        <title>Molecular cloning, characterization, and differential expression of a farnesyl-diphosphate synthase gene from the basidiomycetous fungus Ganoderma lucidum.</title>
        <authorList>
            <person name="Ding Y.X."/>
            <person name="Ou-Yang X."/>
            <person name="Shang C.H."/>
            <person name="Ren A."/>
            <person name="Shi L."/>
            <person name="Li Y.X."/>
            <person name="Zhao M.W."/>
        </authorList>
    </citation>
    <scope>FUNCTION</scope>
</reference>
<reference key="3">
    <citation type="journal article" date="2018" name="Biotechnol. Bioeng.">
        <title>Biosynthesis of a ganoderic acid in Saccharomyces cerevisiae by expressing a cytochrome P450 gene from Ganoderma lucidum.</title>
        <authorList>
            <person name="Wang W.F."/>
            <person name="Xiao H."/>
            <person name="Zhong J.J."/>
        </authorList>
    </citation>
    <scope>FUNCTION</scope>
</reference>
<sequence>MSVYQATASAPVNIACIKYWGKRDTKLILPTNSSLSVTLDQDHLRSTTTARADPSFQKDRLWLNGTEDEIKDGGRLATCIKEMKALRKQLEDKDASLPKISSYSVHISSRNNFPTAAGLASSASGFAALVASLAALYKLPTSQSDLSRIARQGSGSACRSLFGGFVAWQMGELPDGSDSLAVEIAPREHWPDIHALICVVNDEKKGTSSTAGMQRTVETSPLLQHRIKHVVPARMAAISAAIRTRDFDAFARITMQDSNQFHAVALDTEPPIFYMNDVSRAIIALIVEYNRVAVEKTGKLKAAYTYDAGPNAVIYTPKEHIKEIVELIVKYFPQAENFKDPFGLFGAAGVQGKVVDGFNEAVSKPFGVGAVKGLIHTRVGDGPRTLGPEEALLSPDGLPK</sequence>
<name>MVD_GANLU</name>
<comment type="function">
    <text evidence="2 5 6 7">Diphosphomevalonate decarboxylase; part of the second module of ergosterol biosynthesis pathway that includes the middle steps of the pathway (By similarity). The second module involves the formation of farnesyl diphosphate, which is also an important intermediate in the biosynthesis of ubiquinone, dolichol, heme and prenylated proteins (By similarity). This module also plays a key role in the biosynthesis of triterpenes such as ganoderic acids (GA), a group of highly oxygenated lanostane-type triterpenoids which are well recognized as a main group of unique bioactive compounds in the medicinal mushroom Ganoderma lucidum (PubMed:22203490, PubMed:29476632). Activity by the mevalonate kinase first converts mevalonate into 5-phosphomevalonate (By similarity). 5-phosphomevalonate is then further converted to 5-diphosphomevalonate by the phosphomevalonate kinase (By similarity). The diphosphomevalonate decarboxylase MVD then produces isopentenyl diphosphate (PubMed:22203490). The isopentenyl-diphosphate delta-isomerase then catalyzes the 1,3-allylic rearrangement of the homoallylic substrate isopentenyl (IPP) to its highly electrophilic allylic isomer, dimethylallyl diphosphate (DMAPP) (By similarity). Finally the farnesyl diphosphate synthase FPS catalyzes the sequential condensation of isopentenyl pyrophosphate with dimethylallyl pyrophosphate, and then with the resultant geranylpyrophosphate to the ultimate product farnesyl pyrophosphate (PubMed:18540102).</text>
</comment>
<comment type="catalytic activity">
    <reaction evidence="3">
        <text>(R)-5-diphosphomevalonate + ATP = isopentenyl diphosphate + ADP + phosphate + CO2</text>
        <dbReference type="Rhea" id="RHEA:23732"/>
        <dbReference type="ChEBI" id="CHEBI:16526"/>
        <dbReference type="ChEBI" id="CHEBI:30616"/>
        <dbReference type="ChEBI" id="CHEBI:43474"/>
        <dbReference type="ChEBI" id="CHEBI:57557"/>
        <dbReference type="ChEBI" id="CHEBI:128769"/>
        <dbReference type="ChEBI" id="CHEBI:456216"/>
        <dbReference type="EC" id="4.1.1.33"/>
    </reaction>
</comment>
<comment type="pathway">
    <text evidence="3">Isoprenoid biosynthesis; isopentenyl diphosphate biosynthesis via mevalonate pathway; isopentenyl diphosphate from (R)-mevalonate: step 3/3.</text>
</comment>
<comment type="developmental stage">
    <text evidence="6">Expression levels are relatively low in the mycelium. 53.9-fold higher expression level in the primordia than in the 20-day old mycelia.</text>
</comment>
<comment type="induction">
    <text evidence="6">By methyl jasmonate (MeJA).</text>
</comment>
<comment type="similarity">
    <text evidence="3 9">Belongs to the diphosphomevalonate decarboxylase family.</text>
</comment>